<name>PGA39_CANAL</name>
<organism>
    <name type="scientific">Candida albicans (strain SC5314 / ATCC MYA-2876)</name>
    <name type="common">Yeast</name>
    <dbReference type="NCBI Taxonomy" id="237561"/>
    <lineage>
        <taxon>Eukaryota</taxon>
        <taxon>Fungi</taxon>
        <taxon>Dikarya</taxon>
        <taxon>Ascomycota</taxon>
        <taxon>Saccharomycotina</taxon>
        <taxon>Pichiomycetes</taxon>
        <taxon>Debaryomycetaceae</taxon>
        <taxon>Candida/Lodderomyces clade</taxon>
        <taxon>Candida</taxon>
    </lineage>
</organism>
<comment type="subcellular location">
    <subcellularLocation>
        <location evidence="4">Cell membrane</location>
        <topology evidence="4">Lipid-anchor</topology>
        <topology evidence="4">GPI-anchor</topology>
    </subcellularLocation>
</comment>
<comment type="induction">
    <text evidence="3">Up-regulated upon milbemycins A3 oxim derivative (A3Ox) treatment.</text>
</comment>
<protein>
    <recommendedName>
        <fullName>Predicted GPI-anchored protein 39</fullName>
    </recommendedName>
</protein>
<gene>
    <name type="primary">PGA39</name>
    <name type="ordered locus">CAALFM_CR04900CA</name>
    <name type="ORF">CaO19.13679</name>
    <name type="ORF">CaO19.6302</name>
</gene>
<evidence type="ECO:0000255" key="1"/>
<evidence type="ECO:0000256" key="2">
    <source>
        <dbReference type="SAM" id="MobiDB-lite"/>
    </source>
</evidence>
<evidence type="ECO:0000269" key="3">
    <source>
    </source>
</evidence>
<evidence type="ECO:0000305" key="4"/>
<proteinExistence type="evidence at protein level"/>
<keyword id="KW-1003">Cell membrane</keyword>
<keyword id="KW-0325">Glycoprotein</keyword>
<keyword id="KW-0336">GPI-anchor</keyword>
<keyword id="KW-0449">Lipoprotein</keyword>
<keyword id="KW-0472">Membrane</keyword>
<keyword id="KW-1185">Reference proteome</keyword>
<keyword id="KW-0732">Signal</keyword>
<sequence>MKATTFTLLLSIATAINAAAFEDSRLKALFARDAEISFGATLSAEISHGFGHHHGHTADLSSEIGGGSSSSSVSESTVEELSTTTTTESVSASVSASVSASVSASVSVSSSAEETSTEATESAETTDSFETTDSAETTDIVETTDSVDTNTTDISTTDETTEETTDATDSVETTFESVSNTEDLSSSSSSIITDSSESTIEETPLITDTSVPSSLSEEYSTSGSSSEWIHTTTAATSHNSSNSNSNHSNVSNTTTSANFAIQYGTDYGVAVVAAIVGALLI</sequence>
<dbReference type="EMBL" id="CP017630">
    <property type="protein sequence ID" value="AOW31223.1"/>
    <property type="molecule type" value="Genomic_DNA"/>
</dbReference>
<dbReference type="RefSeq" id="XP_711087.2">
    <property type="nucleotide sequence ID" value="XM_705995.2"/>
</dbReference>
<dbReference type="STRING" id="237561.Q59N10"/>
<dbReference type="GlyCosmos" id="Q59N10">
    <property type="glycosylation" value="5 sites, No reported glycans"/>
</dbReference>
<dbReference type="EnsemblFungi" id="CR_04900C_A-T">
    <property type="protein sequence ID" value="CR_04900C_A-T-p1"/>
    <property type="gene ID" value="CR_04900C_A"/>
</dbReference>
<dbReference type="GeneID" id="3647306"/>
<dbReference type="KEGG" id="cal:CAALFM_CR04900CA"/>
<dbReference type="CGD" id="CAL0000183239">
    <property type="gene designation" value="PGA39"/>
</dbReference>
<dbReference type="VEuPathDB" id="FungiDB:CR_04900C_A"/>
<dbReference type="HOGENOM" id="CLU_1030564_0_0_1"/>
<dbReference type="InParanoid" id="Q59N10"/>
<dbReference type="OMA" id="SSSEWIH"/>
<dbReference type="OrthoDB" id="10647362at2759"/>
<dbReference type="PRO" id="PR:Q59N10"/>
<dbReference type="Proteomes" id="UP000000559">
    <property type="component" value="Chromosome R"/>
</dbReference>
<dbReference type="GO" id="GO:0005886">
    <property type="term" value="C:plasma membrane"/>
    <property type="evidence" value="ECO:0007669"/>
    <property type="project" value="UniProtKB-SubCell"/>
</dbReference>
<dbReference type="GO" id="GO:0098552">
    <property type="term" value="C:side of membrane"/>
    <property type="evidence" value="ECO:0007669"/>
    <property type="project" value="UniProtKB-KW"/>
</dbReference>
<feature type="signal peptide" evidence="1">
    <location>
        <begin position="1"/>
        <end position="18"/>
    </location>
</feature>
<feature type="chain" id="PRO_0000424941" description="Predicted GPI-anchored protein 39">
    <location>
        <begin position="19"/>
        <end position="256"/>
    </location>
</feature>
<feature type="propeptide" id="PRO_0000424942" description="Removed in mature form" evidence="1">
    <location>
        <begin position="257"/>
        <end position="281"/>
    </location>
</feature>
<feature type="region of interest" description="Disordered" evidence="2">
    <location>
        <begin position="52"/>
        <end position="94"/>
    </location>
</feature>
<feature type="region of interest" description="Disordered" evidence="2">
    <location>
        <begin position="106"/>
        <end position="227"/>
    </location>
</feature>
<feature type="compositionally biased region" description="Low complexity" evidence="2">
    <location>
        <begin position="69"/>
        <end position="94"/>
    </location>
</feature>
<feature type="compositionally biased region" description="Low complexity" evidence="2">
    <location>
        <begin position="106"/>
        <end position="158"/>
    </location>
</feature>
<feature type="compositionally biased region" description="Low complexity" evidence="2">
    <location>
        <begin position="167"/>
        <end position="203"/>
    </location>
</feature>
<feature type="compositionally biased region" description="Low complexity" evidence="2">
    <location>
        <begin position="210"/>
        <end position="227"/>
    </location>
</feature>
<feature type="lipid moiety-binding region" description="GPI-anchor amidated serine" evidence="1">
    <location>
        <position position="256"/>
    </location>
</feature>
<feature type="glycosylation site" description="N-linked (GlcNAc...) asparagine" evidence="1">
    <location>
        <position position="150"/>
    </location>
</feature>
<feature type="glycosylation site" description="N-linked (GlcNAc...) asparagine" evidence="1">
    <location>
        <position position="239"/>
    </location>
</feature>
<feature type="glycosylation site" description="N-linked (GlcNAc...) asparagine" evidence="1">
    <location>
        <position position="246"/>
    </location>
</feature>
<feature type="glycosylation site" description="N-linked (GlcNAc...) asparagine" evidence="1">
    <location>
        <position position="249"/>
    </location>
</feature>
<feature type="glycosylation site" description="N-linked (GlcNAc...) asparagine" evidence="1">
    <location>
        <position position="252"/>
    </location>
</feature>
<reference key="1">
    <citation type="journal article" date="2004" name="Proc. Natl. Acad. Sci. U.S.A.">
        <title>The diploid genome sequence of Candida albicans.</title>
        <authorList>
            <person name="Jones T."/>
            <person name="Federspiel N.A."/>
            <person name="Chibana H."/>
            <person name="Dungan J."/>
            <person name="Kalman S."/>
            <person name="Magee B.B."/>
            <person name="Newport G."/>
            <person name="Thorstenson Y.R."/>
            <person name="Agabian N."/>
            <person name="Magee P.T."/>
            <person name="Davis R.W."/>
            <person name="Scherer S."/>
        </authorList>
    </citation>
    <scope>NUCLEOTIDE SEQUENCE [LARGE SCALE GENOMIC DNA]</scope>
    <source>
        <strain>SC5314 / ATCC MYA-2876</strain>
    </source>
</reference>
<reference key="2">
    <citation type="journal article" date="2007" name="Genome Biol.">
        <title>Assembly of the Candida albicans genome into sixteen supercontigs aligned on the eight chromosomes.</title>
        <authorList>
            <person name="van het Hoog M."/>
            <person name="Rast T.J."/>
            <person name="Martchenko M."/>
            <person name="Grindle S."/>
            <person name="Dignard D."/>
            <person name="Hogues H."/>
            <person name="Cuomo C."/>
            <person name="Berriman M."/>
            <person name="Scherer S."/>
            <person name="Magee B.B."/>
            <person name="Whiteway M."/>
            <person name="Chibana H."/>
            <person name="Nantel A."/>
            <person name="Magee P.T."/>
        </authorList>
    </citation>
    <scope>GENOME REANNOTATION</scope>
    <source>
        <strain>SC5314 / ATCC MYA-2876</strain>
    </source>
</reference>
<reference key="3">
    <citation type="journal article" date="2013" name="Genome Biol.">
        <title>Assembly of a phased diploid Candida albicans genome facilitates allele-specific measurements and provides a simple model for repeat and indel structure.</title>
        <authorList>
            <person name="Muzzey D."/>
            <person name="Schwartz K."/>
            <person name="Weissman J.S."/>
            <person name="Sherlock G."/>
        </authorList>
    </citation>
    <scope>NUCLEOTIDE SEQUENCE [LARGE SCALE GENOMIC DNA]</scope>
    <scope>GENOME REANNOTATION</scope>
    <source>
        <strain>SC5314 / ATCC MYA-2876</strain>
    </source>
</reference>
<reference key="4">
    <citation type="journal article" date="2003" name="Yeast">
        <title>Genome-wide identification of fungal GPI proteins.</title>
        <authorList>
            <person name="De Groot P.W."/>
            <person name="Hellingwerf K.J."/>
            <person name="Klis F.M."/>
        </authorList>
    </citation>
    <scope>PREDICTION OF GPI-ANCHOR</scope>
</reference>
<reference key="5">
    <citation type="journal article" date="2013" name="Antimicrob. Agents Chemother.">
        <title>Milbemycins: more than efflux inhibitors for fungal pathogens.</title>
        <authorList>
            <person name="Silva L.V."/>
            <person name="Sanguinetti M."/>
            <person name="Vandeputte P."/>
            <person name="Torelli R."/>
            <person name="Rochat B."/>
            <person name="Sanglard D."/>
        </authorList>
    </citation>
    <scope>INDUCTION</scope>
</reference>
<accession>Q59N10</accession>
<accession>A0A1D8PSV6</accession>